<feature type="chain" id="PRO_0000161471" description="tRNA uridine(34) hydroxylase">
    <location>
        <begin position="1"/>
        <end position="350"/>
    </location>
</feature>
<feature type="domain" description="Rhodanese" evidence="2">
    <location>
        <begin position="146"/>
        <end position="240"/>
    </location>
</feature>
<feature type="active site" description="Cysteine persulfide intermediate" evidence="2">
    <location>
        <position position="200"/>
    </location>
</feature>
<dbReference type="EC" id="1.14.-.-" evidence="2"/>
<dbReference type="EMBL" id="AE014075">
    <property type="protein sequence ID" value="AAN79794.1"/>
    <property type="status" value="ALT_INIT"/>
    <property type="molecule type" value="Genomic_DNA"/>
</dbReference>
<dbReference type="RefSeq" id="WP_001298360.1">
    <property type="nucleotide sequence ID" value="NZ_CP051263.1"/>
</dbReference>
<dbReference type="SMR" id="Q8FIR7"/>
<dbReference type="STRING" id="199310.c1321"/>
<dbReference type="KEGG" id="ecc:c1321"/>
<dbReference type="eggNOG" id="COG1054">
    <property type="taxonomic scope" value="Bacteria"/>
</dbReference>
<dbReference type="HOGENOM" id="CLU_038878_1_1_6"/>
<dbReference type="Proteomes" id="UP000001410">
    <property type="component" value="Chromosome"/>
</dbReference>
<dbReference type="GO" id="GO:0016705">
    <property type="term" value="F:oxidoreductase activity, acting on paired donors, with incorporation or reduction of molecular oxygen"/>
    <property type="evidence" value="ECO:0007669"/>
    <property type="project" value="UniProtKB-UniRule"/>
</dbReference>
<dbReference type="GO" id="GO:0006400">
    <property type="term" value="P:tRNA modification"/>
    <property type="evidence" value="ECO:0007669"/>
    <property type="project" value="UniProtKB-UniRule"/>
</dbReference>
<dbReference type="CDD" id="cd01518">
    <property type="entry name" value="RHOD_YceA"/>
    <property type="match status" value="1"/>
</dbReference>
<dbReference type="Gene3D" id="3.30.70.100">
    <property type="match status" value="1"/>
</dbReference>
<dbReference type="Gene3D" id="3.40.250.10">
    <property type="entry name" value="Rhodanese-like domain"/>
    <property type="match status" value="1"/>
</dbReference>
<dbReference type="HAMAP" id="MF_00469">
    <property type="entry name" value="TrhO"/>
    <property type="match status" value="1"/>
</dbReference>
<dbReference type="InterPro" id="IPR001763">
    <property type="entry name" value="Rhodanese-like_dom"/>
</dbReference>
<dbReference type="InterPro" id="IPR036873">
    <property type="entry name" value="Rhodanese-like_dom_sf"/>
</dbReference>
<dbReference type="InterPro" id="IPR022111">
    <property type="entry name" value="Rhodanese_C"/>
</dbReference>
<dbReference type="InterPro" id="IPR020936">
    <property type="entry name" value="TrhO"/>
</dbReference>
<dbReference type="InterPro" id="IPR040503">
    <property type="entry name" value="TRHO_N"/>
</dbReference>
<dbReference type="NCBIfam" id="NF001133">
    <property type="entry name" value="PRK00142.1-1"/>
    <property type="match status" value="1"/>
</dbReference>
<dbReference type="PANTHER" id="PTHR43846:SF1">
    <property type="entry name" value="TRNA URIDINE(34) HYDROXYLASE"/>
    <property type="match status" value="1"/>
</dbReference>
<dbReference type="PANTHER" id="PTHR43846">
    <property type="entry name" value="UPF0176 PROTEIN YCEA"/>
    <property type="match status" value="1"/>
</dbReference>
<dbReference type="Pfam" id="PF00581">
    <property type="entry name" value="Rhodanese"/>
    <property type="match status" value="1"/>
</dbReference>
<dbReference type="Pfam" id="PF12368">
    <property type="entry name" value="Rhodanese_C"/>
    <property type="match status" value="1"/>
</dbReference>
<dbReference type="Pfam" id="PF17773">
    <property type="entry name" value="UPF0176_N"/>
    <property type="match status" value="1"/>
</dbReference>
<dbReference type="SMART" id="SM00450">
    <property type="entry name" value="RHOD"/>
    <property type="match status" value="1"/>
</dbReference>
<dbReference type="SUPFAM" id="SSF52821">
    <property type="entry name" value="Rhodanese/Cell cycle control phosphatase"/>
    <property type="match status" value="1"/>
</dbReference>
<dbReference type="PROSITE" id="PS50206">
    <property type="entry name" value="RHODANESE_3"/>
    <property type="match status" value="1"/>
</dbReference>
<name>TRHO_ECOL6</name>
<protein>
    <recommendedName>
        <fullName evidence="2">tRNA uridine(34) hydroxylase</fullName>
        <ecNumber evidence="2">1.14.-.-</ecNumber>
    </recommendedName>
    <alternativeName>
        <fullName evidence="2">tRNA hydroxylation protein O</fullName>
    </alternativeName>
</protein>
<gene>
    <name evidence="2" type="primary">trhO</name>
    <name type="synonym">yceA</name>
    <name type="ordered locus">c1321</name>
</gene>
<organism>
    <name type="scientific">Escherichia coli O6:H1 (strain CFT073 / ATCC 700928 / UPEC)</name>
    <dbReference type="NCBI Taxonomy" id="199310"/>
    <lineage>
        <taxon>Bacteria</taxon>
        <taxon>Pseudomonadati</taxon>
        <taxon>Pseudomonadota</taxon>
        <taxon>Gammaproteobacteria</taxon>
        <taxon>Enterobacterales</taxon>
        <taxon>Enterobacteriaceae</taxon>
        <taxon>Escherichia</taxon>
    </lineage>
</organism>
<evidence type="ECO:0000250" key="1">
    <source>
        <dbReference type="UniProtKB" id="P24188"/>
    </source>
</evidence>
<evidence type="ECO:0000255" key="2">
    <source>
        <dbReference type="HAMAP-Rule" id="MF_00469"/>
    </source>
</evidence>
<evidence type="ECO:0000305" key="3"/>
<proteinExistence type="inferred from homology"/>
<accession>Q8FIR7</accession>
<reference key="1">
    <citation type="journal article" date="2002" name="Proc. Natl. Acad. Sci. U.S.A.">
        <title>Extensive mosaic structure revealed by the complete genome sequence of uropathogenic Escherichia coli.</title>
        <authorList>
            <person name="Welch R.A."/>
            <person name="Burland V."/>
            <person name="Plunkett G. III"/>
            <person name="Redford P."/>
            <person name="Roesch P."/>
            <person name="Rasko D."/>
            <person name="Buckles E.L."/>
            <person name="Liou S.-R."/>
            <person name="Boutin A."/>
            <person name="Hackett J."/>
            <person name="Stroud D."/>
            <person name="Mayhew G.F."/>
            <person name="Rose D.J."/>
            <person name="Zhou S."/>
            <person name="Schwartz D.C."/>
            <person name="Perna N.T."/>
            <person name="Mobley H.L.T."/>
            <person name="Donnenberg M.S."/>
            <person name="Blattner F.R."/>
        </authorList>
    </citation>
    <scope>NUCLEOTIDE SEQUENCE [LARGE SCALE GENOMIC DNA]</scope>
    <source>
        <strain>CFT073 / ATCC 700928 / UPEC</strain>
    </source>
</reference>
<sequence length="350" mass="39735">MPVLHNRISNDALKAKMLAESEPRTTISFYKYFHIADPKVTRDALYQLFTALNVFGRVYLAHEGINAQISVPASNVETFRAQLYAFDPALEGLRLNIALDDDGKSFWVLRMKVRDRIVADGIDDPHFDASNVGEYLQAAEVNAMLDDPDALFIDMRNHYEYEVGHFENALEIPADTFREQLPKAVEMMQAHKDKKIVMYCTGGIRCEKASAWMKHNGFNKVWHIEGGIIEYARKARDQGLPVRFIGKNFVFDERMGERISDEIIAHCHQCGAPCDSHTNCKNDGCHLLFIQCPVCAEKYKGCCSEICCEESALPPDEQRRRRAGRENGNKIFNKSRGRLNTTLGIPDPTE</sequence>
<keyword id="KW-0560">Oxidoreductase</keyword>
<keyword id="KW-1185">Reference proteome</keyword>
<keyword id="KW-0819">tRNA processing</keyword>
<comment type="function">
    <text evidence="1">Catalyzes oxygen-dependent 5-hydroxyuridine (ho5U) modification at position 34 in tRNAs, the first step in 5-carboxymethoxyuridine (cmo5U) biosynthesis. May be part of an alternate pathway, which is able to bypass cmo5U biogenesis in a subset of tRNAs under aerobic conditions.</text>
</comment>
<comment type="catalytic activity">
    <reaction evidence="2">
        <text>uridine(34) in tRNA + AH2 + O2 = 5-hydroxyuridine(34) in tRNA + A + H2O</text>
        <dbReference type="Rhea" id="RHEA:64224"/>
        <dbReference type="Rhea" id="RHEA-COMP:11727"/>
        <dbReference type="Rhea" id="RHEA-COMP:13381"/>
        <dbReference type="ChEBI" id="CHEBI:13193"/>
        <dbReference type="ChEBI" id="CHEBI:15377"/>
        <dbReference type="ChEBI" id="CHEBI:15379"/>
        <dbReference type="ChEBI" id="CHEBI:17499"/>
        <dbReference type="ChEBI" id="CHEBI:65315"/>
        <dbReference type="ChEBI" id="CHEBI:136877"/>
    </reaction>
</comment>
<comment type="similarity">
    <text evidence="2">Belongs to the TrhO family.</text>
</comment>
<comment type="sequence caution" evidence="3">
    <conflict type="erroneous initiation">
        <sequence resource="EMBL-CDS" id="AAN79794"/>
    </conflict>
</comment>